<keyword id="KW-0028">Amino-acid biosynthesis</keyword>
<keyword id="KW-0057">Aromatic amino acid biosynthesis</keyword>
<keyword id="KW-0274">FAD</keyword>
<keyword id="KW-0285">Flavoprotein</keyword>
<keyword id="KW-0288">FMN</keyword>
<keyword id="KW-0456">Lyase</keyword>
<keyword id="KW-0521">NADP</keyword>
<keyword id="KW-1185">Reference proteome</keyword>
<dbReference type="EC" id="4.2.3.5" evidence="1"/>
<dbReference type="EMBL" id="CP001016">
    <property type="protein sequence ID" value="ACB95492.1"/>
    <property type="molecule type" value="Genomic_DNA"/>
</dbReference>
<dbReference type="RefSeq" id="WP_012384849.1">
    <property type="nucleotide sequence ID" value="NC_010581.1"/>
</dbReference>
<dbReference type="SMR" id="B2IDQ8"/>
<dbReference type="STRING" id="395963.Bind_1868"/>
<dbReference type="KEGG" id="bid:Bind_1868"/>
<dbReference type="eggNOG" id="COG0082">
    <property type="taxonomic scope" value="Bacteria"/>
</dbReference>
<dbReference type="HOGENOM" id="CLU_034547_0_0_5"/>
<dbReference type="OrthoDB" id="9771806at2"/>
<dbReference type="UniPathway" id="UPA00053">
    <property type="reaction ID" value="UER00090"/>
</dbReference>
<dbReference type="Proteomes" id="UP000001695">
    <property type="component" value="Chromosome"/>
</dbReference>
<dbReference type="GO" id="GO:0005829">
    <property type="term" value="C:cytosol"/>
    <property type="evidence" value="ECO:0007669"/>
    <property type="project" value="TreeGrafter"/>
</dbReference>
<dbReference type="GO" id="GO:0004107">
    <property type="term" value="F:chorismate synthase activity"/>
    <property type="evidence" value="ECO:0007669"/>
    <property type="project" value="UniProtKB-UniRule"/>
</dbReference>
<dbReference type="GO" id="GO:0010181">
    <property type="term" value="F:FMN binding"/>
    <property type="evidence" value="ECO:0007669"/>
    <property type="project" value="TreeGrafter"/>
</dbReference>
<dbReference type="GO" id="GO:0008652">
    <property type="term" value="P:amino acid biosynthetic process"/>
    <property type="evidence" value="ECO:0007669"/>
    <property type="project" value="UniProtKB-KW"/>
</dbReference>
<dbReference type="GO" id="GO:0009073">
    <property type="term" value="P:aromatic amino acid family biosynthetic process"/>
    <property type="evidence" value="ECO:0007669"/>
    <property type="project" value="UniProtKB-KW"/>
</dbReference>
<dbReference type="GO" id="GO:0009423">
    <property type="term" value="P:chorismate biosynthetic process"/>
    <property type="evidence" value="ECO:0007669"/>
    <property type="project" value="UniProtKB-UniRule"/>
</dbReference>
<dbReference type="CDD" id="cd07304">
    <property type="entry name" value="Chorismate_synthase"/>
    <property type="match status" value="1"/>
</dbReference>
<dbReference type="Gene3D" id="3.60.150.10">
    <property type="entry name" value="Chorismate synthase AroC"/>
    <property type="match status" value="1"/>
</dbReference>
<dbReference type="HAMAP" id="MF_00300">
    <property type="entry name" value="Chorismate_synth"/>
    <property type="match status" value="1"/>
</dbReference>
<dbReference type="InterPro" id="IPR000453">
    <property type="entry name" value="Chorismate_synth"/>
</dbReference>
<dbReference type="InterPro" id="IPR035904">
    <property type="entry name" value="Chorismate_synth_AroC_sf"/>
</dbReference>
<dbReference type="InterPro" id="IPR020541">
    <property type="entry name" value="Chorismate_synthase_CS"/>
</dbReference>
<dbReference type="NCBIfam" id="TIGR00033">
    <property type="entry name" value="aroC"/>
    <property type="match status" value="1"/>
</dbReference>
<dbReference type="NCBIfam" id="NF003793">
    <property type="entry name" value="PRK05382.1"/>
    <property type="match status" value="1"/>
</dbReference>
<dbReference type="PANTHER" id="PTHR21085">
    <property type="entry name" value="CHORISMATE SYNTHASE"/>
    <property type="match status" value="1"/>
</dbReference>
<dbReference type="PANTHER" id="PTHR21085:SF0">
    <property type="entry name" value="CHORISMATE SYNTHASE"/>
    <property type="match status" value="1"/>
</dbReference>
<dbReference type="Pfam" id="PF01264">
    <property type="entry name" value="Chorismate_synt"/>
    <property type="match status" value="1"/>
</dbReference>
<dbReference type="PIRSF" id="PIRSF001456">
    <property type="entry name" value="Chorismate_synth"/>
    <property type="match status" value="1"/>
</dbReference>
<dbReference type="SUPFAM" id="SSF103263">
    <property type="entry name" value="Chorismate synthase, AroC"/>
    <property type="match status" value="1"/>
</dbReference>
<dbReference type="PROSITE" id="PS00787">
    <property type="entry name" value="CHORISMATE_SYNTHASE_1"/>
    <property type="match status" value="1"/>
</dbReference>
<dbReference type="PROSITE" id="PS00788">
    <property type="entry name" value="CHORISMATE_SYNTHASE_2"/>
    <property type="match status" value="1"/>
</dbReference>
<dbReference type="PROSITE" id="PS00789">
    <property type="entry name" value="CHORISMATE_SYNTHASE_3"/>
    <property type="match status" value="1"/>
</dbReference>
<sequence>MSHNTFGHLFRVTTFGESHGPAIGCVVDGCPPLIPIDEADIQTFLDLRRPGTSRFTTQRQEADRVRILSGVFTDEASGKQVSTGTPIALLIENTDQRSKDYDAIKNLYRPGHADFAYDAKYGLRDHRGGGRSSARETATRVAAGAIARKVVADVTIRGALVQMGPHKINRDAWDWDETTRNPFFCPDAKAAAFFETYLDDIRKAGSSIGAVIEIVAENVPAGWGAPLYGKLDADLASGLMSINAVKGVEIGEGFDAAALSGEANADEMRIGSLGEPVFLSNHAGGILGGISTGQPLVMRFAVKPTSSILQPRHTIDRSGHESEIVTKGRHDPCVGIRAVPVGEAMVACVLADHFLRHRGQIGEGAVWPANRSR</sequence>
<organism>
    <name type="scientific">Beijerinckia indica subsp. indica (strain ATCC 9039 / DSM 1715 / NCIMB 8712)</name>
    <dbReference type="NCBI Taxonomy" id="395963"/>
    <lineage>
        <taxon>Bacteria</taxon>
        <taxon>Pseudomonadati</taxon>
        <taxon>Pseudomonadota</taxon>
        <taxon>Alphaproteobacteria</taxon>
        <taxon>Hyphomicrobiales</taxon>
        <taxon>Beijerinckiaceae</taxon>
        <taxon>Beijerinckia</taxon>
    </lineage>
</organism>
<reference key="1">
    <citation type="journal article" date="2010" name="J. Bacteriol.">
        <title>Complete genome sequence of Beijerinckia indica subsp. indica.</title>
        <authorList>
            <person name="Tamas I."/>
            <person name="Dedysh S.N."/>
            <person name="Liesack W."/>
            <person name="Stott M.B."/>
            <person name="Alam M."/>
            <person name="Murrell J.C."/>
            <person name="Dunfield P.F."/>
        </authorList>
    </citation>
    <scope>NUCLEOTIDE SEQUENCE [LARGE SCALE GENOMIC DNA]</scope>
    <source>
        <strain>ATCC 9039 / DSM 1715 / NCIMB 8712</strain>
    </source>
</reference>
<comment type="function">
    <text evidence="1">Catalyzes the anti-1,4-elimination of the C-3 phosphate and the C-6 proR hydrogen from 5-enolpyruvylshikimate-3-phosphate (EPSP) to yield chorismate, which is the branch point compound that serves as the starting substrate for the three terminal pathways of aromatic amino acid biosynthesis. This reaction introduces a second double bond into the aromatic ring system.</text>
</comment>
<comment type="catalytic activity">
    <reaction evidence="1">
        <text>5-O-(1-carboxyvinyl)-3-phosphoshikimate = chorismate + phosphate</text>
        <dbReference type="Rhea" id="RHEA:21020"/>
        <dbReference type="ChEBI" id="CHEBI:29748"/>
        <dbReference type="ChEBI" id="CHEBI:43474"/>
        <dbReference type="ChEBI" id="CHEBI:57701"/>
        <dbReference type="EC" id="4.2.3.5"/>
    </reaction>
</comment>
<comment type="cofactor">
    <cofactor evidence="1">
        <name>FMNH2</name>
        <dbReference type="ChEBI" id="CHEBI:57618"/>
    </cofactor>
    <text evidence="1">Reduced FMN (FMNH(2)).</text>
</comment>
<comment type="pathway">
    <text evidence="1">Metabolic intermediate biosynthesis; chorismate biosynthesis; chorismate from D-erythrose 4-phosphate and phosphoenolpyruvate: step 7/7.</text>
</comment>
<comment type="subunit">
    <text evidence="1">Homotetramer.</text>
</comment>
<comment type="similarity">
    <text evidence="1">Belongs to the chorismate synthase family.</text>
</comment>
<accession>B2IDQ8</accession>
<proteinExistence type="inferred from homology"/>
<name>AROC_BEII9</name>
<feature type="chain" id="PRO_1000115328" description="Chorismate synthase">
    <location>
        <begin position="1"/>
        <end position="373"/>
    </location>
</feature>
<feature type="binding site" evidence="1">
    <location>
        <position position="48"/>
    </location>
    <ligand>
        <name>NADP(+)</name>
        <dbReference type="ChEBI" id="CHEBI:58349"/>
    </ligand>
</feature>
<feature type="binding site" evidence="1">
    <location>
        <position position="54"/>
    </location>
    <ligand>
        <name>NADP(+)</name>
        <dbReference type="ChEBI" id="CHEBI:58349"/>
    </ligand>
</feature>
<feature type="binding site" evidence="1">
    <location>
        <begin position="131"/>
        <end position="133"/>
    </location>
    <ligand>
        <name>FMN</name>
        <dbReference type="ChEBI" id="CHEBI:58210"/>
    </ligand>
</feature>
<feature type="binding site" evidence="1">
    <location>
        <begin position="243"/>
        <end position="244"/>
    </location>
    <ligand>
        <name>FMN</name>
        <dbReference type="ChEBI" id="CHEBI:58210"/>
    </ligand>
</feature>
<feature type="binding site" evidence="1">
    <location>
        <position position="288"/>
    </location>
    <ligand>
        <name>FMN</name>
        <dbReference type="ChEBI" id="CHEBI:58210"/>
    </ligand>
</feature>
<feature type="binding site" evidence="1">
    <location>
        <begin position="303"/>
        <end position="307"/>
    </location>
    <ligand>
        <name>FMN</name>
        <dbReference type="ChEBI" id="CHEBI:58210"/>
    </ligand>
</feature>
<feature type="binding site" evidence="1">
    <location>
        <position position="329"/>
    </location>
    <ligand>
        <name>FMN</name>
        <dbReference type="ChEBI" id="CHEBI:58210"/>
    </ligand>
</feature>
<protein>
    <recommendedName>
        <fullName evidence="1">Chorismate synthase</fullName>
        <shortName evidence="1">CS</shortName>
        <ecNumber evidence="1">4.2.3.5</ecNumber>
    </recommendedName>
    <alternativeName>
        <fullName evidence="1">5-enolpyruvylshikimate-3-phosphate phospholyase</fullName>
    </alternativeName>
</protein>
<evidence type="ECO:0000255" key="1">
    <source>
        <dbReference type="HAMAP-Rule" id="MF_00300"/>
    </source>
</evidence>
<gene>
    <name evidence="1" type="primary">aroC</name>
    <name type="ordered locus">Bind_1868</name>
</gene>